<protein>
    <recommendedName>
        <fullName evidence="1">Glutathione-regulated potassium-efflux system protein KefC</fullName>
    </recommendedName>
    <alternativeName>
        <fullName evidence="1">K(+)/H(+) antiporter</fullName>
    </alternativeName>
</protein>
<proteinExistence type="inferred from homology"/>
<organism>
    <name type="scientific">Salmonella newport (strain SL254)</name>
    <dbReference type="NCBI Taxonomy" id="423368"/>
    <lineage>
        <taxon>Bacteria</taxon>
        <taxon>Pseudomonadati</taxon>
        <taxon>Pseudomonadota</taxon>
        <taxon>Gammaproteobacteria</taxon>
        <taxon>Enterobacterales</taxon>
        <taxon>Enterobacteriaceae</taxon>
        <taxon>Salmonella</taxon>
    </lineage>
</organism>
<keyword id="KW-0050">Antiport</keyword>
<keyword id="KW-0997">Cell inner membrane</keyword>
<keyword id="KW-1003">Cell membrane</keyword>
<keyword id="KW-0406">Ion transport</keyword>
<keyword id="KW-0472">Membrane</keyword>
<keyword id="KW-0630">Potassium</keyword>
<keyword id="KW-0633">Potassium transport</keyword>
<keyword id="KW-0812">Transmembrane</keyword>
<keyword id="KW-1133">Transmembrane helix</keyword>
<keyword id="KW-0813">Transport</keyword>
<accession>B4T6L2</accession>
<name>KEFC_SALNS</name>
<reference key="1">
    <citation type="journal article" date="2011" name="J. Bacteriol.">
        <title>Comparative genomics of 28 Salmonella enterica isolates: evidence for CRISPR-mediated adaptive sublineage evolution.</title>
        <authorList>
            <person name="Fricke W.F."/>
            <person name="Mammel M.K."/>
            <person name="McDermott P.F."/>
            <person name="Tartera C."/>
            <person name="White D.G."/>
            <person name="Leclerc J.E."/>
            <person name="Ravel J."/>
            <person name="Cebula T.A."/>
        </authorList>
    </citation>
    <scope>NUCLEOTIDE SEQUENCE [LARGE SCALE GENOMIC DNA]</scope>
    <source>
        <strain>SL254</strain>
    </source>
</reference>
<dbReference type="EMBL" id="CP001113">
    <property type="protein sequence ID" value="ACF65217.1"/>
    <property type="molecule type" value="Genomic_DNA"/>
</dbReference>
<dbReference type="RefSeq" id="WP_000377163.1">
    <property type="nucleotide sequence ID" value="NZ_CCMR01000003.1"/>
</dbReference>
<dbReference type="SMR" id="B4T6L2"/>
<dbReference type="KEGG" id="see:SNSL254_A0091"/>
<dbReference type="HOGENOM" id="CLU_005126_9_3_6"/>
<dbReference type="Proteomes" id="UP000008824">
    <property type="component" value="Chromosome"/>
</dbReference>
<dbReference type="GO" id="GO:0005886">
    <property type="term" value="C:plasma membrane"/>
    <property type="evidence" value="ECO:0007669"/>
    <property type="project" value="UniProtKB-SubCell"/>
</dbReference>
<dbReference type="GO" id="GO:0019899">
    <property type="term" value="F:enzyme binding"/>
    <property type="evidence" value="ECO:0007669"/>
    <property type="project" value="InterPro"/>
</dbReference>
<dbReference type="GO" id="GO:0015503">
    <property type="term" value="F:glutathione-regulated potassium exporter activity"/>
    <property type="evidence" value="ECO:0007669"/>
    <property type="project" value="UniProtKB-UniRule"/>
</dbReference>
<dbReference type="GO" id="GO:0015643">
    <property type="term" value="F:toxic substance binding"/>
    <property type="evidence" value="ECO:0007669"/>
    <property type="project" value="InterPro"/>
</dbReference>
<dbReference type="GO" id="GO:1902600">
    <property type="term" value="P:proton transmembrane transport"/>
    <property type="evidence" value="ECO:0007669"/>
    <property type="project" value="InterPro"/>
</dbReference>
<dbReference type="GO" id="GO:0051595">
    <property type="term" value="P:response to methylglyoxal"/>
    <property type="evidence" value="ECO:0007669"/>
    <property type="project" value="InterPro"/>
</dbReference>
<dbReference type="FunFam" id="1.20.1530.20:FF:000001">
    <property type="entry name" value="Glutathione-regulated potassium-efflux system protein KefB"/>
    <property type="match status" value="1"/>
</dbReference>
<dbReference type="FunFam" id="3.40.50.720:FF:000036">
    <property type="entry name" value="Glutathione-regulated potassium-efflux system protein KefB"/>
    <property type="match status" value="1"/>
</dbReference>
<dbReference type="Gene3D" id="1.20.1530.20">
    <property type="match status" value="1"/>
</dbReference>
<dbReference type="Gene3D" id="3.40.50.720">
    <property type="entry name" value="NAD(P)-binding Rossmann-like Domain"/>
    <property type="match status" value="1"/>
</dbReference>
<dbReference type="HAMAP" id="MF_01413">
    <property type="entry name" value="K_H_efflux_KefC"/>
    <property type="match status" value="1"/>
</dbReference>
<dbReference type="InterPro" id="IPR006153">
    <property type="entry name" value="Cation/H_exchanger_TM"/>
</dbReference>
<dbReference type="InterPro" id="IPR004771">
    <property type="entry name" value="K/H_exchanger"/>
</dbReference>
<dbReference type="InterPro" id="IPR023941">
    <property type="entry name" value="K_H_efflux_KefC"/>
</dbReference>
<dbReference type="InterPro" id="IPR006036">
    <property type="entry name" value="K_uptake_TrkA"/>
</dbReference>
<dbReference type="InterPro" id="IPR038770">
    <property type="entry name" value="Na+/solute_symporter_sf"/>
</dbReference>
<dbReference type="InterPro" id="IPR036291">
    <property type="entry name" value="NAD(P)-bd_dom_sf"/>
</dbReference>
<dbReference type="InterPro" id="IPR003148">
    <property type="entry name" value="RCK_N"/>
</dbReference>
<dbReference type="NCBIfam" id="TIGR00932">
    <property type="entry name" value="2a37"/>
    <property type="match status" value="1"/>
</dbReference>
<dbReference type="NCBIfam" id="NF002924">
    <property type="entry name" value="PRK03562.1"/>
    <property type="match status" value="1"/>
</dbReference>
<dbReference type="PANTHER" id="PTHR46157:SF3">
    <property type="entry name" value="GLUTATHIONE-REGULATED POTASSIUM-EFFLUX SYSTEM PROTEIN KEFC"/>
    <property type="match status" value="1"/>
</dbReference>
<dbReference type="PANTHER" id="PTHR46157">
    <property type="entry name" value="K(+) EFFLUX ANTIPORTER 3, CHLOROPLASTIC"/>
    <property type="match status" value="1"/>
</dbReference>
<dbReference type="Pfam" id="PF00999">
    <property type="entry name" value="Na_H_Exchanger"/>
    <property type="match status" value="1"/>
</dbReference>
<dbReference type="Pfam" id="PF02254">
    <property type="entry name" value="TrkA_N"/>
    <property type="match status" value="1"/>
</dbReference>
<dbReference type="PRINTS" id="PR00335">
    <property type="entry name" value="KUPTAKETRKA"/>
</dbReference>
<dbReference type="SUPFAM" id="SSF51735">
    <property type="entry name" value="NAD(P)-binding Rossmann-fold domains"/>
    <property type="match status" value="1"/>
</dbReference>
<dbReference type="PROSITE" id="PS51201">
    <property type="entry name" value="RCK_N"/>
    <property type="match status" value="1"/>
</dbReference>
<sequence length="620" mass="67068">MDSHTLLQALIYLGSAALIVPIAVRLGLGSVLGYLIAGCIIGPWGLRLVTDAESILHFAEIGVVLMLFVIGLELDPQRLWKLRASVFGGGALQMVVCGGLIGLFCMFLGLRWQVAELIGMTLALSSTAIAMQAMNERNLTVSQVGRSAFAVLLFQDIAAIPLVAMIPLLAASGASTTLGAFALSALKVAGALALVVLLGRYVTRPALRFVARSGLREVFSAVALFLVFGFGLLLEEVGLSMAMGAFLAGVLLASSEYRHALESDIEPFKGLLLGLFFIGVGMSIDFGTLVENPLRILLLLAGFLAIKIVMLWLVARPLGVPAKQRRWFAVLLGQGSEFAFVVFGAAQMADVLEPEWAKALTLAVALSMAATPIFLVLLTRMEKTATGEAREADEIDEEQPRVIVAGFGRFGQIAGRLLLSSGVKMVVLDHDPDHIETLRKFGMKVFYGDATRMDLLESAGAAKAEVLINAIDDPQTNLQLSELVKSHFPHLQIIARARDVDHYIRLRQAGVAMPERETFEGALKSGRQALEALGLGRYEARERADLFRHFNTRMVEEMAKGENDPLSRAAAYKRTSAMLSEIITEDREHLSLIQRHGWQGTAEGKHSGEAADEPEVKPSI</sequence>
<evidence type="ECO:0000255" key="1">
    <source>
        <dbReference type="HAMAP-Rule" id="MF_01413"/>
    </source>
</evidence>
<evidence type="ECO:0000255" key="2">
    <source>
        <dbReference type="PROSITE-ProRule" id="PRU00543"/>
    </source>
</evidence>
<evidence type="ECO:0000256" key="3">
    <source>
        <dbReference type="SAM" id="MobiDB-lite"/>
    </source>
</evidence>
<comment type="function">
    <text evidence="1">Pore-forming subunit of a potassium efflux system that confers protection against electrophiles. Catalyzes K(+)/H(+) antiport.</text>
</comment>
<comment type="subunit">
    <text evidence="1">Homodimer. Interacts with the regulatory subunit KefF.</text>
</comment>
<comment type="subcellular location">
    <subcellularLocation>
        <location evidence="1">Cell inner membrane</location>
        <topology evidence="1">Multi-pass membrane protein</topology>
    </subcellularLocation>
</comment>
<comment type="similarity">
    <text evidence="1">Belongs to the monovalent cation:proton antiporter 2 (CPA2) transporter (TC 2.A.37) family. KefC subfamily.</text>
</comment>
<feature type="chain" id="PRO_1000145549" description="Glutathione-regulated potassium-efflux system protein KefC">
    <location>
        <begin position="1"/>
        <end position="620"/>
    </location>
</feature>
<feature type="transmembrane region" description="Helical" evidence="1">
    <location>
        <begin position="4"/>
        <end position="24"/>
    </location>
</feature>
<feature type="transmembrane region" description="Helical" evidence="1">
    <location>
        <begin position="26"/>
        <end position="46"/>
    </location>
</feature>
<feature type="transmembrane region" description="Helical" evidence="1">
    <location>
        <begin position="54"/>
        <end position="74"/>
    </location>
</feature>
<feature type="transmembrane region" description="Helical" evidence="1">
    <location>
        <begin position="90"/>
        <end position="110"/>
    </location>
</feature>
<feature type="transmembrane region" description="Helical" evidence="1">
    <location>
        <begin position="114"/>
        <end position="134"/>
    </location>
</feature>
<feature type="transmembrane region" description="Helical" evidence="1">
    <location>
        <begin position="149"/>
        <end position="169"/>
    </location>
</feature>
<feature type="transmembrane region" description="Helical" evidence="1">
    <location>
        <begin position="178"/>
        <end position="198"/>
    </location>
</feature>
<feature type="transmembrane region" description="Helical" evidence="1">
    <location>
        <begin position="218"/>
        <end position="238"/>
    </location>
</feature>
<feature type="transmembrane region" description="Helical" evidence="1">
    <location>
        <begin position="270"/>
        <end position="290"/>
    </location>
</feature>
<feature type="transmembrane region" description="Helical" evidence="1">
    <location>
        <begin position="294"/>
        <end position="314"/>
    </location>
</feature>
<feature type="transmembrane region" description="Helical" evidence="1">
    <location>
        <begin position="327"/>
        <end position="347"/>
    </location>
</feature>
<feature type="transmembrane region" description="Helical" evidence="1">
    <location>
        <begin position="359"/>
        <end position="379"/>
    </location>
</feature>
<feature type="domain" description="RCK N-terminal" evidence="2">
    <location>
        <begin position="399"/>
        <end position="518"/>
    </location>
</feature>
<feature type="region of interest" description="Disordered" evidence="3">
    <location>
        <begin position="599"/>
        <end position="620"/>
    </location>
</feature>
<gene>
    <name evidence="1" type="primary">kefC</name>
    <name type="ordered locus">SNSL254_A0091</name>
</gene>